<proteinExistence type="evidence at transcript level"/>
<gene>
    <name type="primary">traS</name>
    <name type="ordered locus">ECOK12F100</name>
</gene>
<name>TRAS1_ECOLI</name>
<comment type="function">
    <text>Involved in surface exclusion.</text>
</comment>
<comment type="subcellular location">
    <subcellularLocation>
        <location>Cell inner membrane</location>
    </subcellularLocation>
</comment>
<comment type="induction">
    <text>The expression is positively controlled by the product of TraJ.</text>
</comment>
<accession>P09129</accession>
<geneLocation type="plasmid">
    <name>F</name>
</geneLocation>
<sequence>MITQQIISSELEVLKKHIDSGDIRIPSLWQGLKPGLIIMGWMIFCPLLMSFLITQKTSETLTAVLAGGWLGLIILFIVARIRMLYFSLPEEFLKTSSVMRVISSKLKVYFIVYMGVIFLWSFLGGGIIYGFGAILVTVIMAFLIQLDIGRYQFVGVIDAINSYVKNKKLSRVK</sequence>
<protein>
    <recommendedName>
        <fullName>Protein TraS</fullName>
    </recommendedName>
</protein>
<evidence type="ECO:0000305" key="1"/>
<dbReference type="EMBL" id="X06915">
    <property type="protein sequence ID" value="CAA30011.1"/>
    <property type="molecule type" value="Genomic_DNA"/>
</dbReference>
<dbReference type="EMBL" id="U01159">
    <property type="protein sequence ID" value="AAC44196.1"/>
    <property type="molecule type" value="Genomic_DNA"/>
</dbReference>
<dbReference type="EMBL" id="AP001918">
    <property type="protein sequence ID" value="BAA97970.1"/>
    <property type="molecule type" value="Genomic_DNA"/>
</dbReference>
<dbReference type="EMBL" id="M59763">
    <property type="protein sequence ID" value="AAA98082.1"/>
    <property type="molecule type" value="Genomic_DNA"/>
</dbReference>
<dbReference type="PIR" id="S01756">
    <property type="entry name" value="S01756"/>
</dbReference>
<dbReference type="RefSeq" id="NP_061479.1">
    <property type="nucleotide sequence ID" value="NC_002483.1"/>
</dbReference>
<dbReference type="RefSeq" id="WP_000632670.1">
    <property type="nucleotide sequence ID" value="NZ_JACEFS010000047.1"/>
</dbReference>
<dbReference type="SMR" id="P09129"/>
<dbReference type="PATRIC" id="fig|83333.107.peg.612"/>
<dbReference type="OrthoDB" id="6631015at2"/>
<dbReference type="PRO" id="PR:P09129"/>
<dbReference type="GO" id="GO:0005886">
    <property type="term" value="C:plasma membrane"/>
    <property type="evidence" value="ECO:0007669"/>
    <property type="project" value="UniProtKB-SubCell"/>
</dbReference>
<dbReference type="NCBIfam" id="NF010304">
    <property type="entry name" value="PRK13741.1"/>
    <property type="match status" value="1"/>
</dbReference>
<organism>
    <name type="scientific">Escherichia coli (strain K12)</name>
    <dbReference type="NCBI Taxonomy" id="83333"/>
    <lineage>
        <taxon>Bacteria</taxon>
        <taxon>Pseudomonadati</taxon>
        <taxon>Pseudomonadota</taxon>
        <taxon>Gammaproteobacteria</taxon>
        <taxon>Enterobacterales</taxon>
        <taxon>Enterobacteriaceae</taxon>
        <taxon>Escherichia</taxon>
    </lineage>
</organism>
<keyword id="KW-0997">Cell inner membrane</keyword>
<keyword id="KW-1003">Cell membrane</keyword>
<keyword id="KW-0184">Conjugation</keyword>
<keyword id="KW-0472">Membrane</keyword>
<keyword id="KW-0614">Plasmid</keyword>
<feature type="chain" id="PRO_0000068476" description="Protein TraS">
    <location>
        <begin position="1"/>
        <end position="173"/>
    </location>
</feature>
<feature type="sequence conflict" description="In Ref. 1 and 2." evidence="1" ref="1 2">
    <original>IQLDIGRYQFVGVIDAINSYVKNKKLSRVK</original>
    <variation>DSIRYR</variation>
    <location>
        <begin position="144"/>
        <end position="173"/>
    </location>
</feature>
<reference key="1">
    <citation type="journal article" date="1987" name="J. Mol. Biol.">
        <title>Surface exclusion genes traS and traT of the F sex factor of Escherichia coli K-12. Determination of the nucleotide sequence and promoter and terminator activities.</title>
        <authorList>
            <person name="Jalajakumari M.B."/>
            <person name="Guidolin A."/>
            <person name="Buhj H.J."/>
            <person name="Manning P.A."/>
        </authorList>
    </citation>
    <scope>NUCLEOTIDE SEQUENCE [GENOMIC DNA]</scope>
    <source>
        <strain>K12</strain>
    </source>
</reference>
<reference key="2">
    <citation type="journal article" date="1994" name="Microbiol. Rev.">
        <title>Analysis of the sequence and gene products of the transfer region of the F sex factor.</title>
        <authorList>
            <person name="Frost L.S."/>
            <person name="Ippen-Ihler K."/>
            <person name="Skurray R.A."/>
        </authorList>
    </citation>
    <scope>NUCLEOTIDE SEQUENCE [GENOMIC DNA]</scope>
</reference>
<reference key="3">
    <citation type="submission" date="2000-04" db="EMBL/GenBank/DDBJ databases">
        <title>Complete nucleotide sequence of the F plasmid: its implications for organization and diversification of plasmid genomes.</title>
        <authorList>
            <person name="Shimizu H."/>
            <person name="Saitoh Y."/>
            <person name="Suda Y."/>
            <person name="Uehara K."/>
            <person name="Sampei G."/>
            <person name="Mizobuchi K."/>
        </authorList>
    </citation>
    <scope>NUCLEOTIDE SEQUENCE [LARGE SCALE GENOMIC DNA]</scope>
    <source>
        <strain>K12 / CR63</strain>
    </source>
</reference>
<reference key="4">
    <citation type="journal article" date="1992" name="Mol. Gen. Genet.">
        <title>Characterization of the F plasmid bifunctional conjugation gene, traG.</title>
        <authorList>
            <person name="Firth N."/>
            <person name="Skurray R.A."/>
        </authorList>
    </citation>
    <scope>NUCLEOTIDE SEQUENCE [GENOMIC DNA] OF 1-25</scope>
</reference>